<sequence>MTYWLVPIQEDMWDVIRDKGIYGYKENLEEFIKEGDYIIIYVSKYYAKRYGGKIVGIVKVLSNWYEDQTPIYPEETVRNKGIYIYRVKVEPVVIGECDMKKILDKIRFIEDKGQIAKYLRNAPANLKRPIPESDAKIVEECLKESLLNI</sequence>
<gene>
    <name type="ordered locus">SSO2595</name>
</gene>
<comment type="similarity">
    <text evidence="1">Belongs to the UPF0310 family.</text>
</comment>
<comment type="sequence caution" evidence="2">
    <conflict type="erroneous initiation">
        <sequence resource="EMBL-CDS" id="AAK42718"/>
    </conflict>
</comment>
<accession>Q97VM6</accession>
<keyword id="KW-1185">Reference proteome</keyword>
<organism>
    <name type="scientific">Saccharolobus solfataricus (strain ATCC 35092 / DSM 1617 / JCM 11322 / P2)</name>
    <name type="common">Sulfolobus solfataricus</name>
    <dbReference type="NCBI Taxonomy" id="273057"/>
    <lineage>
        <taxon>Archaea</taxon>
        <taxon>Thermoproteota</taxon>
        <taxon>Thermoprotei</taxon>
        <taxon>Sulfolobales</taxon>
        <taxon>Sulfolobaceae</taxon>
        <taxon>Saccharolobus</taxon>
    </lineage>
</organism>
<proteinExistence type="inferred from homology"/>
<evidence type="ECO:0000255" key="1">
    <source>
        <dbReference type="HAMAP-Rule" id="MF_00771"/>
    </source>
</evidence>
<evidence type="ECO:0000305" key="2"/>
<dbReference type="EMBL" id="AE006641">
    <property type="protein sequence ID" value="AAK42718.1"/>
    <property type="status" value="ALT_INIT"/>
    <property type="molecule type" value="Genomic_DNA"/>
</dbReference>
<dbReference type="PIR" id="G90432">
    <property type="entry name" value="G90432"/>
</dbReference>
<dbReference type="SMR" id="Q97VM6"/>
<dbReference type="PaxDb" id="273057-SSO2595"/>
<dbReference type="EnsemblBacteria" id="AAK42718">
    <property type="protein sequence ID" value="AAK42718"/>
    <property type="gene ID" value="SSO2595"/>
</dbReference>
<dbReference type="KEGG" id="sso:SSO2595"/>
<dbReference type="PATRIC" id="fig|273057.12.peg.2676"/>
<dbReference type="eggNOG" id="arCOG02727">
    <property type="taxonomic scope" value="Archaea"/>
</dbReference>
<dbReference type="HOGENOM" id="CLU_1754697_0_0_2"/>
<dbReference type="InParanoid" id="Q97VM6"/>
<dbReference type="PhylomeDB" id="Q97VM6"/>
<dbReference type="Proteomes" id="UP000001974">
    <property type="component" value="Chromosome"/>
</dbReference>
<dbReference type="CDD" id="cd21132">
    <property type="entry name" value="EVE-like"/>
    <property type="match status" value="1"/>
</dbReference>
<dbReference type="Gene3D" id="3.10.590.10">
    <property type="entry name" value="ph1033 like domains"/>
    <property type="match status" value="1"/>
</dbReference>
<dbReference type="HAMAP" id="MF_00771">
    <property type="entry name" value="UPF0310"/>
    <property type="match status" value="1"/>
</dbReference>
<dbReference type="InterPro" id="IPR002740">
    <property type="entry name" value="EVE_domain"/>
</dbReference>
<dbReference type="InterPro" id="IPR015947">
    <property type="entry name" value="PUA-like_sf"/>
</dbReference>
<dbReference type="InterPro" id="IPR022996">
    <property type="entry name" value="UPF0310"/>
</dbReference>
<dbReference type="NCBIfam" id="NF002008">
    <property type="entry name" value="PRK00809.1"/>
    <property type="match status" value="1"/>
</dbReference>
<dbReference type="PANTHER" id="PTHR39661">
    <property type="entry name" value="UPF0310 PROTEIN MJECL36"/>
    <property type="match status" value="1"/>
</dbReference>
<dbReference type="PANTHER" id="PTHR39661:SF1">
    <property type="entry name" value="UPF0310 PROTEIN MJECL36"/>
    <property type="match status" value="1"/>
</dbReference>
<dbReference type="Pfam" id="PF01878">
    <property type="entry name" value="EVE"/>
    <property type="match status" value="1"/>
</dbReference>
<dbReference type="SUPFAM" id="SSF88697">
    <property type="entry name" value="PUA domain-like"/>
    <property type="match status" value="1"/>
</dbReference>
<name>Y2595_SACS2</name>
<protein>
    <recommendedName>
        <fullName evidence="1">UPF0310 protein SSO2595</fullName>
    </recommendedName>
</protein>
<reference key="1">
    <citation type="journal article" date="2001" name="Proc. Natl. Acad. Sci. U.S.A.">
        <title>The complete genome of the crenarchaeon Sulfolobus solfataricus P2.</title>
        <authorList>
            <person name="She Q."/>
            <person name="Singh R.K."/>
            <person name="Confalonieri F."/>
            <person name="Zivanovic Y."/>
            <person name="Allard G."/>
            <person name="Awayez M.J."/>
            <person name="Chan-Weiher C.C.-Y."/>
            <person name="Clausen I.G."/>
            <person name="Curtis B.A."/>
            <person name="De Moors A."/>
            <person name="Erauso G."/>
            <person name="Fletcher C."/>
            <person name="Gordon P.M.K."/>
            <person name="Heikamp-de Jong I."/>
            <person name="Jeffries A.C."/>
            <person name="Kozera C.J."/>
            <person name="Medina N."/>
            <person name="Peng X."/>
            <person name="Thi-Ngoc H.P."/>
            <person name="Redder P."/>
            <person name="Schenk M.E."/>
            <person name="Theriault C."/>
            <person name="Tolstrup N."/>
            <person name="Charlebois R.L."/>
            <person name="Doolittle W.F."/>
            <person name="Duguet M."/>
            <person name="Gaasterland T."/>
            <person name="Garrett R.A."/>
            <person name="Ragan M.A."/>
            <person name="Sensen C.W."/>
            <person name="Van der Oost J."/>
        </authorList>
    </citation>
    <scope>NUCLEOTIDE SEQUENCE [LARGE SCALE GENOMIC DNA]</scope>
    <source>
        <strain>ATCC 35092 / DSM 1617 / JCM 11322 / P2</strain>
    </source>
</reference>
<feature type="chain" id="PRO_0000059639" description="UPF0310 protein SSO2595">
    <location>
        <begin position="1"/>
        <end position="149"/>
    </location>
</feature>